<reference key="1">
    <citation type="journal article" date="2005" name="Nature">
        <title>Sequencing of Aspergillus nidulans and comparative analysis with A. fumigatus and A. oryzae.</title>
        <authorList>
            <person name="Galagan J.E."/>
            <person name="Calvo S.E."/>
            <person name="Cuomo C."/>
            <person name="Ma L.-J."/>
            <person name="Wortman J.R."/>
            <person name="Batzoglou S."/>
            <person name="Lee S.-I."/>
            <person name="Bastuerkmen M."/>
            <person name="Spevak C.C."/>
            <person name="Clutterbuck J."/>
            <person name="Kapitonov V."/>
            <person name="Jurka J."/>
            <person name="Scazzocchio C."/>
            <person name="Farman M.L."/>
            <person name="Butler J."/>
            <person name="Purcell S."/>
            <person name="Harris S."/>
            <person name="Braus G.H."/>
            <person name="Draht O."/>
            <person name="Busch S."/>
            <person name="D'Enfert C."/>
            <person name="Bouchier C."/>
            <person name="Goldman G.H."/>
            <person name="Bell-Pedersen D."/>
            <person name="Griffiths-Jones S."/>
            <person name="Doonan J.H."/>
            <person name="Yu J."/>
            <person name="Vienken K."/>
            <person name="Pain A."/>
            <person name="Freitag M."/>
            <person name="Selker E.U."/>
            <person name="Archer D.B."/>
            <person name="Penalva M.A."/>
            <person name="Oakley B.R."/>
            <person name="Momany M."/>
            <person name="Tanaka T."/>
            <person name="Kumagai T."/>
            <person name="Asai K."/>
            <person name="Machida M."/>
            <person name="Nierman W.C."/>
            <person name="Denning D.W."/>
            <person name="Caddick M.X."/>
            <person name="Hynes M."/>
            <person name="Paoletti M."/>
            <person name="Fischer R."/>
            <person name="Miller B.L."/>
            <person name="Dyer P.S."/>
            <person name="Sachs M.S."/>
            <person name="Osmani S.A."/>
            <person name="Birren B.W."/>
        </authorList>
    </citation>
    <scope>NUCLEOTIDE SEQUENCE [LARGE SCALE GENOMIC DNA]</scope>
    <source>
        <strain>FGSC A4 / ATCC 38163 / CBS 112.46 / NRRL 194 / M139</strain>
    </source>
</reference>
<reference key="2">
    <citation type="journal article" date="2009" name="Fungal Genet. Biol.">
        <title>The 2008 update of the Aspergillus nidulans genome annotation: a community effort.</title>
        <authorList>
            <person name="Wortman J.R."/>
            <person name="Gilsenan J.M."/>
            <person name="Joardar V."/>
            <person name="Deegan J."/>
            <person name="Clutterbuck J."/>
            <person name="Andersen M.R."/>
            <person name="Archer D."/>
            <person name="Bencina M."/>
            <person name="Braus G."/>
            <person name="Coutinho P."/>
            <person name="von Dohren H."/>
            <person name="Doonan J."/>
            <person name="Driessen A.J."/>
            <person name="Durek P."/>
            <person name="Espeso E."/>
            <person name="Fekete E."/>
            <person name="Flipphi M."/>
            <person name="Estrada C.G."/>
            <person name="Geysens S."/>
            <person name="Goldman G."/>
            <person name="de Groot P.W."/>
            <person name="Hansen K."/>
            <person name="Harris S.D."/>
            <person name="Heinekamp T."/>
            <person name="Helmstaedt K."/>
            <person name="Henrissat B."/>
            <person name="Hofmann G."/>
            <person name="Homan T."/>
            <person name="Horio T."/>
            <person name="Horiuchi H."/>
            <person name="James S."/>
            <person name="Jones M."/>
            <person name="Karaffa L."/>
            <person name="Karanyi Z."/>
            <person name="Kato M."/>
            <person name="Keller N."/>
            <person name="Kelly D.E."/>
            <person name="Kiel J.A."/>
            <person name="Kim J.M."/>
            <person name="van der Klei I.J."/>
            <person name="Klis F.M."/>
            <person name="Kovalchuk A."/>
            <person name="Krasevec N."/>
            <person name="Kubicek C.P."/>
            <person name="Liu B."/>
            <person name="Maccabe A."/>
            <person name="Meyer V."/>
            <person name="Mirabito P."/>
            <person name="Miskei M."/>
            <person name="Mos M."/>
            <person name="Mullins J."/>
            <person name="Nelson D.R."/>
            <person name="Nielsen J."/>
            <person name="Oakley B.R."/>
            <person name="Osmani S.A."/>
            <person name="Pakula T."/>
            <person name="Paszewski A."/>
            <person name="Paulsen I."/>
            <person name="Pilsyk S."/>
            <person name="Pocsi I."/>
            <person name="Punt P.J."/>
            <person name="Ram A.F."/>
            <person name="Ren Q."/>
            <person name="Robellet X."/>
            <person name="Robson G."/>
            <person name="Seiboth B."/>
            <person name="van Solingen P."/>
            <person name="Specht T."/>
            <person name="Sun J."/>
            <person name="Taheri-Talesh N."/>
            <person name="Takeshita N."/>
            <person name="Ussery D."/>
            <person name="vanKuyk P.A."/>
            <person name="Visser H."/>
            <person name="van de Vondervoort P.J."/>
            <person name="de Vries R.P."/>
            <person name="Walton J."/>
            <person name="Xiang X."/>
            <person name="Xiong Y."/>
            <person name="Zeng A.P."/>
            <person name="Brandt B.W."/>
            <person name="Cornell M.J."/>
            <person name="van den Hondel C.A."/>
            <person name="Visser J."/>
            <person name="Oliver S.G."/>
            <person name="Turner G."/>
        </authorList>
    </citation>
    <scope>GENOME REANNOTATION</scope>
    <source>
        <strain>FGSC A4 / ATCC 38163 / CBS 112.46 / NRRL 194 / M139</strain>
    </source>
</reference>
<name>NPR3_EMENI</name>
<comment type="function">
    <text evidence="1">Mediates inactivation of the TORC1 complex in response to amino acid starvation. Required for meiotic nuclear division (By similarity).</text>
</comment>
<comment type="similarity">
    <text evidence="4">Belongs to the NPR3 family.</text>
</comment>
<comment type="sequence caution" evidence="4">
    <conflict type="erroneous gene model prediction">
        <sequence resource="EMBL-CDS" id="EAA65882"/>
    </conflict>
    <text>The predicted gene AN1289 has been split into 2 genes: AN10176 and AN10171.</text>
</comment>
<accession>C8VSE7</accession>
<accession>Q5BDU1</accession>
<organism>
    <name type="scientific">Emericella nidulans (strain FGSC A4 / ATCC 38163 / CBS 112.46 / NRRL 194 / M139)</name>
    <name type="common">Aspergillus nidulans</name>
    <dbReference type="NCBI Taxonomy" id="227321"/>
    <lineage>
        <taxon>Eukaryota</taxon>
        <taxon>Fungi</taxon>
        <taxon>Dikarya</taxon>
        <taxon>Ascomycota</taxon>
        <taxon>Pezizomycotina</taxon>
        <taxon>Eurotiomycetes</taxon>
        <taxon>Eurotiomycetidae</taxon>
        <taxon>Eurotiales</taxon>
        <taxon>Aspergillaceae</taxon>
        <taxon>Aspergillus</taxon>
        <taxon>Aspergillus subgen. Nidulantes</taxon>
    </lineage>
</organism>
<keyword id="KW-0469">Meiosis</keyword>
<keyword id="KW-1185">Reference proteome</keyword>
<keyword id="KW-0732">Signal</keyword>
<dbReference type="EMBL" id="AACD01000017">
    <property type="protein sequence ID" value="EAA65882.1"/>
    <property type="status" value="ALT_SEQ"/>
    <property type="molecule type" value="Genomic_DNA"/>
</dbReference>
<dbReference type="EMBL" id="BN001308">
    <property type="protein sequence ID" value="CBF87783.1"/>
    <property type="molecule type" value="Genomic_DNA"/>
</dbReference>
<dbReference type="RefSeq" id="XP_658893.1">
    <property type="nucleotide sequence ID" value="XM_653801.1"/>
</dbReference>
<dbReference type="SMR" id="C8VSE7"/>
<dbReference type="FunCoup" id="C8VSE7">
    <property type="interactions" value="97"/>
</dbReference>
<dbReference type="STRING" id="227321.C8VSE7"/>
<dbReference type="EnsemblFungi" id="CBF87783">
    <property type="protein sequence ID" value="CBF87783"/>
    <property type="gene ID" value="ANIA_10171"/>
</dbReference>
<dbReference type="KEGG" id="ani:ANIA_10171"/>
<dbReference type="VEuPathDB" id="FungiDB:AN10171"/>
<dbReference type="eggNOG" id="KOG3830">
    <property type="taxonomic scope" value="Eukaryota"/>
</dbReference>
<dbReference type="HOGENOM" id="CLU_014314_1_0_1"/>
<dbReference type="InParanoid" id="C8VSE7"/>
<dbReference type="OMA" id="RTDYVWK"/>
<dbReference type="OrthoDB" id="18648at2759"/>
<dbReference type="Proteomes" id="UP000000560">
    <property type="component" value="Chromosome VIII"/>
</dbReference>
<dbReference type="GO" id="GO:1990130">
    <property type="term" value="C:GATOR1 complex"/>
    <property type="evidence" value="ECO:0000318"/>
    <property type="project" value="GO_Central"/>
</dbReference>
<dbReference type="GO" id="GO:0034198">
    <property type="term" value="P:cellular response to amino acid starvation"/>
    <property type="evidence" value="ECO:0000318"/>
    <property type="project" value="GO_Central"/>
</dbReference>
<dbReference type="GO" id="GO:0051321">
    <property type="term" value="P:meiotic cell cycle"/>
    <property type="evidence" value="ECO:0007669"/>
    <property type="project" value="UniProtKB-KW"/>
</dbReference>
<dbReference type="GO" id="GO:1904262">
    <property type="term" value="P:negative regulation of TORC1 signaling"/>
    <property type="evidence" value="ECO:0000318"/>
    <property type="project" value="GO_Central"/>
</dbReference>
<dbReference type="GO" id="GO:0010508">
    <property type="term" value="P:positive regulation of autophagy"/>
    <property type="evidence" value="ECO:0000318"/>
    <property type="project" value="GO_Central"/>
</dbReference>
<dbReference type="InterPro" id="IPR056603">
    <property type="entry name" value="HTH_NPRL3"/>
</dbReference>
<dbReference type="InterPro" id="IPR005365">
    <property type="entry name" value="Npr3"/>
</dbReference>
<dbReference type="PANTHER" id="PTHR13153">
    <property type="entry name" value="CGTHBA PROTEIN -14 GENE PROTEIN"/>
    <property type="match status" value="1"/>
</dbReference>
<dbReference type="PANTHER" id="PTHR13153:SF5">
    <property type="entry name" value="GATOR COMPLEX PROTEIN NPRL3"/>
    <property type="match status" value="1"/>
</dbReference>
<dbReference type="Pfam" id="PF24064">
    <property type="entry name" value="HTH_NPRL3"/>
    <property type="match status" value="1"/>
</dbReference>
<dbReference type="Pfam" id="PF03666">
    <property type="entry name" value="NPR3"/>
    <property type="match status" value="1"/>
</dbReference>
<proteinExistence type="inferred from homology"/>
<feature type="signal peptide" evidence="2">
    <location>
        <begin position="1"/>
        <end position="23"/>
    </location>
</feature>
<feature type="chain" id="PRO_0000301800" description="Nitrogen permease regulator 3">
    <location>
        <begin position="24"/>
        <end position="816"/>
    </location>
</feature>
<feature type="region of interest" description="Disordered" evidence="3">
    <location>
        <begin position="26"/>
        <end position="166"/>
    </location>
</feature>
<feature type="region of interest" description="Disordered" evidence="3">
    <location>
        <begin position="213"/>
        <end position="249"/>
    </location>
</feature>
<feature type="region of interest" description="Disordered" evidence="3">
    <location>
        <begin position="262"/>
        <end position="287"/>
    </location>
</feature>
<feature type="region of interest" description="Disordered" evidence="3">
    <location>
        <begin position="632"/>
        <end position="684"/>
    </location>
</feature>
<feature type="compositionally biased region" description="Basic residues" evidence="3">
    <location>
        <begin position="44"/>
        <end position="56"/>
    </location>
</feature>
<feature type="compositionally biased region" description="Low complexity" evidence="3">
    <location>
        <begin position="82"/>
        <end position="95"/>
    </location>
</feature>
<feature type="compositionally biased region" description="Polar residues" evidence="3">
    <location>
        <begin position="101"/>
        <end position="127"/>
    </location>
</feature>
<feature type="compositionally biased region" description="Basic and acidic residues" evidence="3">
    <location>
        <begin position="148"/>
        <end position="159"/>
    </location>
</feature>
<feature type="compositionally biased region" description="Basic residues" evidence="3">
    <location>
        <begin position="214"/>
        <end position="224"/>
    </location>
</feature>
<feature type="compositionally biased region" description="Basic and acidic residues" evidence="3">
    <location>
        <begin position="225"/>
        <end position="238"/>
    </location>
</feature>
<feature type="compositionally biased region" description="Polar residues" evidence="3">
    <location>
        <begin position="268"/>
        <end position="282"/>
    </location>
</feature>
<feature type="compositionally biased region" description="Basic and acidic residues" evidence="3">
    <location>
        <begin position="641"/>
        <end position="654"/>
    </location>
</feature>
<feature type="compositionally biased region" description="Low complexity" evidence="3">
    <location>
        <begin position="660"/>
        <end position="676"/>
    </location>
</feature>
<protein>
    <recommendedName>
        <fullName>Nitrogen permease regulator 3</fullName>
    </recommendedName>
    <alternativeName>
        <fullName>Required for meiotic nuclear division protein 11</fullName>
    </alternativeName>
</protein>
<sequence>MSSIARPPDPCLVAVVLIARSRAGPRFVFHYPPRPLADNALRPPKARRTSRSRSRQNSKGNDSTSSDDSHSSSDEDEEEAPSQNLNNSNNSNNNSYIAGSRRSSNFGLDDSNTLSENQRPGSISSSRAYLRKRGANSDAETDSGVGSDRQEDGSRESDGPNRVPWESILGLPVDVWEKLLSPSRSWHKRRFELGINDLAFVGWPVFVREDGNWRKQRRKKKKKQRAEWESGELGHNDATEDSQDDGNDAVAASTETLSPFSALHPISQRPSVPNSRSSQMSSEPLDADDKDMMTMFNVVFVLDPPLLEYSMRVREIYDNVIKKFSKALKWEQSRTNYVWRECQHILNIKEKAKEKRSSLNSLYADIISQSSLARAIRTLYTSISASKIASVTLSPDVSISLQIPPLTSTPYLPGPTDQAYPGLWLTTADSISPADDPMTDDNSAPHQVLAKHFALLLLDNEATIIKDVEAAGGALAPPLVHYIRCSSPTKSFVQISQISGMPLPTIQFLASHLVYWRRARAIPPLHQRDTYIVSPNCDLSKLEVASAAYKVAFPTLPSLPKMLSALSGTPRPYGNFIPSKDHKATYFLILAWLLRGGWVTQLRSFARVKVSPEIKMAVELAIRREEVDKYLSKGKPPVATSDKEDSVNDERTEGSDFDDASSSSSSSLASHGSGDATPMPNRFRADTGVDLTHSLLDQTASLKTSSLILLPHKVSPLESRWLDEIVARFPDNAPDFVGNTTEVDSATPIPAKSLKEVWPTYLKYFNGYDALEKIPVREGLKRKLVSQVLTRLGLVTGQSSTELDPREQVLVSFRHW</sequence>
<evidence type="ECO:0000250" key="1"/>
<evidence type="ECO:0000255" key="2"/>
<evidence type="ECO:0000256" key="3">
    <source>
        <dbReference type="SAM" id="MobiDB-lite"/>
    </source>
</evidence>
<evidence type="ECO:0000305" key="4"/>
<gene>
    <name type="primary">npr3</name>
    <name type="synonym">rmd11</name>
    <name type="ORF">AN10171</name>
    <name type="ORF">AN1289</name>
</gene>